<comment type="function">
    <text evidence="1">This enzyme is involved in nucleotide metabolism: it produces dUMP, the immediate precursor of thymidine nucleotides and it decreases the intracellular concentration of dUTP so that uracil cannot be incorporated into DNA.</text>
</comment>
<comment type="catalytic activity">
    <reaction evidence="1">
        <text>dUTP + H2O = dUMP + diphosphate + H(+)</text>
        <dbReference type="Rhea" id="RHEA:10248"/>
        <dbReference type="ChEBI" id="CHEBI:15377"/>
        <dbReference type="ChEBI" id="CHEBI:15378"/>
        <dbReference type="ChEBI" id="CHEBI:33019"/>
        <dbReference type="ChEBI" id="CHEBI:61555"/>
        <dbReference type="ChEBI" id="CHEBI:246422"/>
        <dbReference type="EC" id="3.6.1.23"/>
    </reaction>
</comment>
<comment type="cofactor">
    <cofactor evidence="1">
        <name>Mg(2+)</name>
        <dbReference type="ChEBI" id="CHEBI:18420"/>
    </cofactor>
</comment>
<comment type="pathway">
    <text evidence="1">Pyrimidine metabolism; dUMP biosynthesis; dUMP from dCTP (dUTP route): step 2/2.</text>
</comment>
<comment type="similarity">
    <text evidence="1">Belongs to the dUTPase family.</text>
</comment>
<proteinExistence type="inferred from homology"/>
<organism>
    <name type="scientific">Nitrosospira multiformis (strain ATCC 25196 / NCIMB 11849 / C 71)</name>
    <dbReference type="NCBI Taxonomy" id="323848"/>
    <lineage>
        <taxon>Bacteria</taxon>
        <taxon>Pseudomonadati</taxon>
        <taxon>Pseudomonadota</taxon>
        <taxon>Betaproteobacteria</taxon>
        <taxon>Nitrosomonadales</taxon>
        <taxon>Nitrosomonadaceae</taxon>
        <taxon>Nitrosospira</taxon>
    </lineage>
</organism>
<gene>
    <name evidence="1" type="primary">dut</name>
    <name type="ordered locus">Nmul_A2136</name>
</gene>
<feature type="chain" id="PRO_0000231416" description="Deoxyuridine 5'-triphosphate nucleotidohydrolase">
    <location>
        <begin position="1"/>
        <end position="149"/>
    </location>
</feature>
<feature type="binding site" evidence="1">
    <location>
        <begin position="68"/>
        <end position="70"/>
    </location>
    <ligand>
        <name>substrate</name>
    </ligand>
</feature>
<feature type="binding site" evidence="1">
    <location>
        <position position="81"/>
    </location>
    <ligand>
        <name>substrate</name>
    </ligand>
</feature>
<feature type="binding site" evidence="1">
    <location>
        <begin position="85"/>
        <end position="87"/>
    </location>
    <ligand>
        <name>substrate</name>
    </ligand>
</feature>
<sequence length="149" mass="15973">MKKIDIKILDSRLKDQLPAYATSGSAGLDLRACIEHVMTIQPGEAHLIPTGIAIHLSDPGLAALVLPRSGLGHKHGIVMGNLVGLIDSDYQGQIFVSCWNRGQAPFLLNPLERIAQLVVVPVVQVGFKVVDDFEQSERGANGFGSTGKH</sequence>
<protein>
    <recommendedName>
        <fullName evidence="1">Deoxyuridine 5'-triphosphate nucleotidohydrolase</fullName>
        <shortName evidence="1">dUTPase</shortName>
        <ecNumber evidence="1">3.6.1.23</ecNumber>
    </recommendedName>
    <alternativeName>
        <fullName evidence="1">dUTP pyrophosphatase</fullName>
    </alternativeName>
</protein>
<reference key="1">
    <citation type="submission" date="2005-08" db="EMBL/GenBank/DDBJ databases">
        <title>Complete sequence of chromosome 1 of Nitrosospira multiformis ATCC 25196.</title>
        <authorList>
            <person name="Copeland A."/>
            <person name="Lucas S."/>
            <person name="Lapidus A."/>
            <person name="Barry K."/>
            <person name="Detter J.C."/>
            <person name="Glavina T."/>
            <person name="Hammon N."/>
            <person name="Israni S."/>
            <person name="Pitluck S."/>
            <person name="Chain P."/>
            <person name="Malfatti S."/>
            <person name="Shin M."/>
            <person name="Vergez L."/>
            <person name="Schmutz J."/>
            <person name="Larimer F."/>
            <person name="Land M."/>
            <person name="Hauser L."/>
            <person name="Kyrpides N."/>
            <person name="Lykidis A."/>
            <person name="Richardson P."/>
        </authorList>
    </citation>
    <scope>NUCLEOTIDE SEQUENCE [LARGE SCALE GENOMIC DNA]</scope>
    <source>
        <strain>ATCC 25196 / NCIMB 11849 / C 71</strain>
    </source>
</reference>
<accession>Q2Y742</accession>
<keyword id="KW-0378">Hydrolase</keyword>
<keyword id="KW-0460">Magnesium</keyword>
<keyword id="KW-0479">Metal-binding</keyword>
<keyword id="KW-0546">Nucleotide metabolism</keyword>
<keyword id="KW-1185">Reference proteome</keyword>
<dbReference type="EC" id="3.6.1.23" evidence="1"/>
<dbReference type="EMBL" id="CP000103">
    <property type="protein sequence ID" value="ABB75429.1"/>
    <property type="molecule type" value="Genomic_DNA"/>
</dbReference>
<dbReference type="RefSeq" id="WP_011381438.1">
    <property type="nucleotide sequence ID" value="NC_007614.1"/>
</dbReference>
<dbReference type="SMR" id="Q2Y742"/>
<dbReference type="STRING" id="323848.Nmul_A2136"/>
<dbReference type="KEGG" id="nmu:Nmul_A2136"/>
<dbReference type="eggNOG" id="COG0756">
    <property type="taxonomic scope" value="Bacteria"/>
</dbReference>
<dbReference type="HOGENOM" id="CLU_068508_1_1_4"/>
<dbReference type="OrthoDB" id="9809956at2"/>
<dbReference type="UniPathway" id="UPA00610">
    <property type="reaction ID" value="UER00666"/>
</dbReference>
<dbReference type="Proteomes" id="UP000002718">
    <property type="component" value="Chromosome"/>
</dbReference>
<dbReference type="GO" id="GO:0004170">
    <property type="term" value="F:dUTP diphosphatase activity"/>
    <property type="evidence" value="ECO:0007669"/>
    <property type="project" value="UniProtKB-UniRule"/>
</dbReference>
<dbReference type="GO" id="GO:0000287">
    <property type="term" value="F:magnesium ion binding"/>
    <property type="evidence" value="ECO:0007669"/>
    <property type="project" value="UniProtKB-UniRule"/>
</dbReference>
<dbReference type="GO" id="GO:0006226">
    <property type="term" value="P:dUMP biosynthetic process"/>
    <property type="evidence" value="ECO:0007669"/>
    <property type="project" value="UniProtKB-UniRule"/>
</dbReference>
<dbReference type="GO" id="GO:0046081">
    <property type="term" value="P:dUTP catabolic process"/>
    <property type="evidence" value="ECO:0007669"/>
    <property type="project" value="InterPro"/>
</dbReference>
<dbReference type="CDD" id="cd07557">
    <property type="entry name" value="trimeric_dUTPase"/>
    <property type="match status" value="1"/>
</dbReference>
<dbReference type="FunFam" id="2.70.40.10:FF:000002">
    <property type="entry name" value="dUTP diphosphatase"/>
    <property type="match status" value="1"/>
</dbReference>
<dbReference type="Gene3D" id="2.70.40.10">
    <property type="match status" value="1"/>
</dbReference>
<dbReference type="HAMAP" id="MF_00116">
    <property type="entry name" value="dUTPase_bact"/>
    <property type="match status" value="1"/>
</dbReference>
<dbReference type="InterPro" id="IPR008181">
    <property type="entry name" value="dUTPase"/>
</dbReference>
<dbReference type="InterPro" id="IPR029054">
    <property type="entry name" value="dUTPase-like"/>
</dbReference>
<dbReference type="InterPro" id="IPR036157">
    <property type="entry name" value="dUTPase-like_sf"/>
</dbReference>
<dbReference type="InterPro" id="IPR033704">
    <property type="entry name" value="dUTPase_trimeric"/>
</dbReference>
<dbReference type="NCBIfam" id="TIGR00576">
    <property type="entry name" value="dut"/>
    <property type="match status" value="1"/>
</dbReference>
<dbReference type="NCBIfam" id="NF001862">
    <property type="entry name" value="PRK00601.1"/>
    <property type="match status" value="1"/>
</dbReference>
<dbReference type="PANTHER" id="PTHR11241">
    <property type="entry name" value="DEOXYURIDINE 5'-TRIPHOSPHATE NUCLEOTIDOHYDROLASE"/>
    <property type="match status" value="1"/>
</dbReference>
<dbReference type="PANTHER" id="PTHR11241:SF0">
    <property type="entry name" value="DEOXYURIDINE 5'-TRIPHOSPHATE NUCLEOTIDOHYDROLASE"/>
    <property type="match status" value="1"/>
</dbReference>
<dbReference type="Pfam" id="PF00692">
    <property type="entry name" value="dUTPase"/>
    <property type="match status" value="1"/>
</dbReference>
<dbReference type="SUPFAM" id="SSF51283">
    <property type="entry name" value="dUTPase-like"/>
    <property type="match status" value="1"/>
</dbReference>
<name>DUT_NITMU</name>
<evidence type="ECO:0000255" key="1">
    <source>
        <dbReference type="HAMAP-Rule" id="MF_00116"/>
    </source>
</evidence>